<name>YE7X_SYNY3</name>
<protein>
    <recommendedName>
        <fullName>Uncharacterized protein sll1747.1</fullName>
    </recommendedName>
</protein>
<proteinExistence type="predicted"/>
<dbReference type="EMBL" id="X67516">
    <property type="protein sequence ID" value="CAA47856.1"/>
    <property type="molecule type" value="Genomic_DNA"/>
</dbReference>
<dbReference type="EMBL" id="BA000022">
    <property type="status" value="NOT_ANNOTATED_CDS"/>
    <property type="molecule type" value="Genomic_DNA"/>
</dbReference>
<dbReference type="PIR" id="B49316">
    <property type="entry name" value="B49316"/>
</dbReference>
<dbReference type="InParanoid" id="P39204"/>
<dbReference type="Proteomes" id="UP000001425">
    <property type="component" value="Chromosome"/>
</dbReference>
<accession>P39204</accession>
<organism>
    <name type="scientific">Synechocystis sp. (strain ATCC 27184 / PCC 6803 / Kazusa)</name>
    <dbReference type="NCBI Taxonomy" id="1111708"/>
    <lineage>
        <taxon>Bacteria</taxon>
        <taxon>Bacillati</taxon>
        <taxon>Cyanobacteriota</taxon>
        <taxon>Cyanophyceae</taxon>
        <taxon>Synechococcales</taxon>
        <taxon>Merismopediaceae</taxon>
        <taxon>Synechocystis</taxon>
    </lineage>
</organism>
<reference key="1">
    <citation type="journal article" date="1993" name="J. Biol. Chem.">
        <title>A novel operon organization involving the genes for chorismate synthase (aromatic biosynthesis pathway) and ribosomal GTPase center proteins (L11, L1, L10, L12: rplKAJL) in cyanobacterium Synechocystis PCC 6803.</title>
        <authorList>
            <person name="Schmidt J."/>
            <person name="Bubunenko M."/>
            <person name="Subramanian A.R."/>
        </authorList>
    </citation>
    <scope>NUCLEOTIDE SEQUENCE [GENOMIC DNA]</scope>
</reference>
<reference key="2">
    <citation type="journal article" date="1996" name="DNA Res.">
        <title>Sequence analysis of the genome of the unicellular cyanobacterium Synechocystis sp. strain PCC6803. II. Sequence determination of the entire genome and assignment of potential protein-coding regions.</title>
        <authorList>
            <person name="Kaneko T."/>
            <person name="Sato S."/>
            <person name="Kotani H."/>
            <person name="Tanaka A."/>
            <person name="Asamizu E."/>
            <person name="Nakamura Y."/>
            <person name="Miyajima N."/>
            <person name="Hirosawa M."/>
            <person name="Sugiura M."/>
            <person name="Sasamoto S."/>
            <person name="Kimura T."/>
            <person name="Hosouchi T."/>
            <person name="Matsuno A."/>
            <person name="Muraki A."/>
            <person name="Nakazaki N."/>
            <person name="Naruo K."/>
            <person name="Okumura S."/>
            <person name="Shimpo S."/>
            <person name="Takeuchi C."/>
            <person name="Wada T."/>
            <person name="Watanabe A."/>
            <person name="Yamada M."/>
            <person name="Yasuda M."/>
            <person name="Tabata S."/>
        </authorList>
    </citation>
    <scope>NUCLEOTIDE SEQUENCE [LARGE SCALE GENOMIC DNA]</scope>
    <source>
        <strain>ATCC 27184 / PCC 6803 / Kazusa</strain>
    </source>
</reference>
<feature type="chain" id="PRO_0000157903" description="Uncharacterized protein sll1747.1">
    <location>
        <begin position="1"/>
        <end position="81"/>
    </location>
</feature>
<gene>
    <name type="ordered locus">sll1747.1</name>
</gene>
<keyword id="KW-1185">Reference proteome</keyword>
<sequence>MLPQAIESSGSQNCCSIARVWKIGRKKFTNINRVNGKLANPSKFRCLMPRSPVGTMPTKLTHLLCPNSLPCFGDRARIQPI</sequence>